<keyword id="KW-0002">3D-structure</keyword>
<keyword id="KW-0903">Direct protein sequencing</keyword>
<keyword id="KW-0249">Electron transport</keyword>
<keyword id="KW-0349">Heme</keyword>
<keyword id="KW-0408">Iron</keyword>
<keyword id="KW-0479">Metal-binding</keyword>
<keyword id="KW-1185">Reference proteome</keyword>
<keyword id="KW-0732">Signal</keyword>
<keyword id="KW-0813">Transport</keyword>
<sequence length="154" mass="15958">MKHVLASTAAGLMALGLASSAIAAGLSPEEQIETRQAGYEFMGWNMGKIKANLEGEYNAAQVEAAANVIAAIANSGMGALYGPGTDKNVGDVKTRVKPEFFQNMEDVGKIAREFVGAANTLAEVAATGEAEAVKTAFGDVGAACKSCHEKYRAK</sequence>
<dbReference type="EMBL" id="U25811">
    <property type="protein sequence ID" value="AAA85867.1"/>
    <property type="molecule type" value="Genomic_DNA"/>
</dbReference>
<dbReference type="EMBL" id="CP001896">
    <property type="protein sequence ID" value="ADC63674.1"/>
    <property type="molecule type" value="Genomic_DNA"/>
</dbReference>
<dbReference type="PIR" id="A00147">
    <property type="entry name" value="CCKRCV"/>
</dbReference>
<dbReference type="RefSeq" id="WP_012971942.1">
    <property type="nucleotide sequence ID" value="NC_013851.1"/>
</dbReference>
<dbReference type="PDB" id="1BBH">
    <property type="method" value="X-ray"/>
    <property type="resolution" value="1.80 A"/>
    <property type="chains" value="A/B=24-154"/>
</dbReference>
<dbReference type="PDB" id="5GYR">
    <property type="method" value="X-ray"/>
    <property type="resolution" value="1.60 A"/>
    <property type="chains" value="A/B/E/F/I/J/M/N=24-154"/>
</dbReference>
<dbReference type="PDBsum" id="1BBH"/>
<dbReference type="PDBsum" id="5GYR"/>
<dbReference type="SMR" id="P00154"/>
<dbReference type="STRING" id="572477.Alvin_2765"/>
<dbReference type="KEGG" id="alv:Alvin_2765"/>
<dbReference type="eggNOG" id="COG3909">
    <property type="taxonomic scope" value="Bacteria"/>
</dbReference>
<dbReference type="HOGENOM" id="CLU_106713_4_0_6"/>
<dbReference type="OrthoDB" id="5520910at2"/>
<dbReference type="EvolutionaryTrace" id="P00154"/>
<dbReference type="Proteomes" id="UP000001441">
    <property type="component" value="Chromosome"/>
</dbReference>
<dbReference type="GO" id="GO:0042597">
    <property type="term" value="C:periplasmic space"/>
    <property type="evidence" value="ECO:0007669"/>
    <property type="project" value="InterPro"/>
</dbReference>
<dbReference type="GO" id="GO:0009055">
    <property type="term" value="F:electron transfer activity"/>
    <property type="evidence" value="ECO:0007669"/>
    <property type="project" value="InterPro"/>
</dbReference>
<dbReference type="GO" id="GO:0020037">
    <property type="term" value="F:heme binding"/>
    <property type="evidence" value="ECO:0007669"/>
    <property type="project" value="InterPro"/>
</dbReference>
<dbReference type="GO" id="GO:0005506">
    <property type="term" value="F:iron ion binding"/>
    <property type="evidence" value="ECO:0007669"/>
    <property type="project" value="InterPro"/>
</dbReference>
<dbReference type="GO" id="GO:0022900">
    <property type="term" value="P:electron transport chain"/>
    <property type="evidence" value="ECO:0007669"/>
    <property type="project" value="InterPro"/>
</dbReference>
<dbReference type="Gene3D" id="1.20.120.10">
    <property type="entry name" value="Cytochrome c/b562"/>
    <property type="match status" value="1"/>
</dbReference>
<dbReference type="InterPro" id="IPR010980">
    <property type="entry name" value="Cyt_c/b562"/>
</dbReference>
<dbReference type="InterPro" id="IPR002321">
    <property type="entry name" value="Cyt_c_II"/>
</dbReference>
<dbReference type="InterPro" id="IPR012127">
    <property type="entry name" value="Cyt_c_prime"/>
</dbReference>
<dbReference type="InterPro" id="IPR015984">
    <property type="entry name" value="Cyt_c_prime_subgr"/>
</dbReference>
<dbReference type="Pfam" id="PF01322">
    <property type="entry name" value="Cytochrom_C_2"/>
    <property type="match status" value="1"/>
</dbReference>
<dbReference type="PIRSF" id="PIRSF000027">
    <property type="entry name" value="Cytc_c_prime"/>
    <property type="match status" value="1"/>
</dbReference>
<dbReference type="PRINTS" id="PR00608">
    <property type="entry name" value="CYTCHROMECII"/>
</dbReference>
<dbReference type="SUPFAM" id="SSF47175">
    <property type="entry name" value="Cytochromes"/>
    <property type="match status" value="1"/>
</dbReference>
<dbReference type="PROSITE" id="PS51009">
    <property type="entry name" value="CYTCII"/>
    <property type="match status" value="1"/>
</dbReference>
<comment type="function">
    <text>Cytochrome c' is the most widely occurring bacterial c-type cytochrome. Cytochromes c' are high-spin proteins and the heme has no sixth ligand. Their exact function is not known.</text>
</comment>
<comment type="subunit">
    <text>Homodimer.</text>
</comment>
<comment type="PTM">
    <text evidence="2">Binds 1 heme c group covalently per subunit.</text>
</comment>
<accession>P00154</accession>
<accession>D3RQ63</accession>
<reference key="1">
    <citation type="journal article" date="1995" name="Biochim. Biophys. Acta">
        <title>Molecular cloning and sequencing of cytochrome c' from the phototrophic purple sulfur bacterium Chromatium vinosum.</title>
        <authorList>
            <person name="Even M.T."/>
            <person name="Kassner R.J."/>
            <person name="Dolata M."/>
            <person name="Meyer T.E."/>
            <person name="Cusanovich M.A."/>
        </authorList>
    </citation>
    <scope>NUCLEOTIDE SEQUENCE [GENOMIC DNA]</scope>
</reference>
<reference key="2">
    <citation type="journal article" date="2011" name="Stand. Genomic Sci.">
        <title>Complete genome sequence of Allochromatium vinosum DSM 180(T).</title>
        <authorList>
            <person name="Weissgerber T."/>
            <person name="Zigann R."/>
            <person name="Bruce D."/>
            <person name="Chang Y.J."/>
            <person name="Detter J.C."/>
            <person name="Han C."/>
            <person name="Hauser L."/>
            <person name="Jeffries C.D."/>
            <person name="Land M."/>
            <person name="Munk A.C."/>
            <person name="Tapia R."/>
            <person name="Dahl C."/>
        </authorList>
    </citation>
    <scope>NUCLEOTIDE SEQUENCE [LARGE SCALE GENOMIC DNA]</scope>
    <source>
        <strain>ATCC 17899 / DSM 180 / NBRC 103801 / NCIMB 10441 / D</strain>
    </source>
</reference>
<reference key="3">
    <citation type="journal article" date="1979" name="Biochem. J.">
        <title>The amino acid sequence of cytochrome c' from the purple sulphur bacterium Chromatium vinosum.</title>
        <authorList>
            <person name="Ambler R.P."/>
            <person name="Daniel M."/>
            <person name="Meyer T.E."/>
            <person name="Bartsch R.G."/>
            <person name="Kamen M.D."/>
        </authorList>
    </citation>
    <scope>PROTEIN SEQUENCE OF 24-154</scope>
</reference>
<reference evidence="3" key="4">
    <citation type="journal article" date="1993" name="J. Mol. Biol.">
        <title>Atomic structure of a cytochrome c' with an unusual ligand-controlled dimer dissociation at 1.8-A resolution.</title>
        <authorList>
            <person name="Ren Z."/>
            <person name="Meyer T.E."/>
            <person name="McRee D.E."/>
        </authorList>
    </citation>
    <scope>X-RAY CRYSTALLOGRAPHY (1.8 ANGSTROMS) OF 24-154 IN COMPLEX WITH HEME C</scope>
</reference>
<evidence type="ECO:0000269" key="1">
    <source>
    </source>
</evidence>
<evidence type="ECO:0000269" key="2">
    <source>
    </source>
</evidence>
<evidence type="ECO:0007744" key="3">
    <source>
        <dbReference type="PDB" id="1BBH"/>
    </source>
</evidence>
<evidence type="ECO:0007829" key="4">
    <source>
        <dbReference type="PDB" id="1BBH"/>
    </source>
</evidence>
<evidence type="ECO:0007829" key="5">
    <source>
        <dbReference type="PDB" id="5GYR"/>
    </source>
</evidence>
<name>CYCP_ALLVD</name>
<proteinExistence type="evidence at protein level"/>
<organism>
    <name type="scientific">Allochromatium vinosum (strain ATCC 17899 / DSM 180 / NBRC 103801 / NCIMB 10441 / D)</name>
    <name type="common">Chromatium vinosum</name>
    <dbReference type="NCBI Taxonomy" id="572477"/>
    <lineage>
        <taxon>Bacteria</taxon>
        <taxon>Pseudomonadati</taxon>
        <taxon>Pseudomonadota</taxon>
        <taxon>Gammaproteobacteria</taxon>
        <taxon>Chromatiales</taxon>
        <taxon>Chromatiaceae</taxon>
        <taxon>Allochromatium</taxon>
    </lineage>
</organism>
<gene>
    <name type="primary">cycA</name>
    <name type="ordered locus">Alvin_2765</name>
</gene>
<protein>
    <recommendedName>
        <fullName>Cytochrome c'</fullName>
    </recommendedName>
</protein>
<feature type="signal peptide" evidence="1">
    <location>
        <begin position="1"/>
        <end position="23"/>
    </location>
</feature>
<feature type="chain" id="PRO_0000006510" description="Cytochrome c'">
    <location>
        <begin position="24"/>
        <end position="154"/>
    </location>
</feature>
<feature type="binding site" evidence="2 3">
    <location>
        <position position="35"/>
    </location>
    <ligand>
        <name>heme c</name>
        <dbReference type="ChEBI" id="CHEBI:61717"/>
    </ligand>
</feature>
<feature type="binding site" evidence="2 3">
    <location>
        <position position="36"/>
    </location>
    <ligand>
        <name>heme c</name>
        <dbReference type="ChEBI" id="CHEBI:61717"/>
    </ligand>
</feature>
<feature type="binding site" evidence="2 3">
    <location>
        <position position="95"/>
    </location>
    <ligand>
        <name>heme c</name>
        <dbReference type="ChEBI" id="CHEBI:61717"/>
    </ligand>
</feature>
<feature type="binding site" description="covalent" evidence="2 3">
    <location>
        <position position="144"/>
    </location>
    <ligand>
        <name>heme c</name>
        <dbReference type="ChEBI" id="CHEBI:61717"/>
    </ligand>
</feature>
<feature type="binding site" description="covalent" evidence="2 3">
    <location>
        <position position="147"/>
    </location>
    <ligand>
        <name>heme c</name>
        <dbReference type="ChEBI" id="CHEBI:61717"/>
    </ligand>
</feature>
<feature type="binding site" description="axial binding residue" evidence="2 3">
    <location>
        <position position="148"/>
    </location>
    <ligand>
        <name>heme c</name>
        <dbReference type="ChEBI" id="CHEBI:61717"/>
    </ligand>
    <ligandPart>
        <name>Fe</name>
        <dbReference type="ChEBI" id="CHEBI:18248"/>
    </ligandPart>
</feature>
<feature type="helix" evidence="5">
    <location>
        <begin position="28"/>
        <end position="54"/>
    </location>
</feature>
<feature type="helix" evidence="5">
    <location>
        <begin position="59"/>
        <end position="73"/>
    </location>
</feature>
<feature type="helix" evidence="5">
    <location>
        <begin position="77"/>
        <end position="80"/>
    </location>
</feature>
<feature type="helix" evidence="4">
    <location>
        <begin position="83"/>
        <end position="86"/>
    </location>
</feature>
<feature type="helix" evidence="5">
    <location>
        <begin position="98"/>
        <end position="103"/>
    </location>
</feature>
<feature type="strand" evidence="5">
    <location>
        <begin position="104"/>
        <end position="106"/>
    </location>
</feature>
<feature type="helix" evidence="5">
    <location>
        <begin position="109"/>
        <end position="126"/>
    </location>
</feature>
<feature type="helix" evidence="5">
    <location>
        <begin position="130"/>
        <end position="151"/>
    </location>
</feature>